<name>TBB6_ECTVR</name>
<organism>
    <name type="scientific">Ectocarpus variabilis</name>
    <name type="common">Brown alga</name>
    <dbReference type="NCBI Taxonomy" id="2881"/>
    <lineage>
        <taxon>Eukaryota</taxon>
        <taxon>Sar</taxon>
        <taxon>Stramenopiles</taxon>
        <taxon>Ochrophyta</taxon>
        <taxon>PX clade</taxon>
        <taxon>Phaeophyceae</taxon>
        <taxon>Ectocarpales</taxon>
        <taxon>Ectocarpaceae</taxon>
        <taxon>Ectocarpus</taxon>
    </lineage>
</organism>
<reference key="1">
    <citation type="journal article" date="1991" name="Plant Mol. Biol.">
        <title>Beta-tubulins are encoded by at least four genes in the brown alga Ectocarpus variabilis.</title>
        <authorList>
            <person name="Mackay R.M."/>
            <person name="Gallant J.W."/>
        </authorList>
    </citation>
    <scope>NUCLEOTIDE SEQUENCE [MRNA]</scope>
</reference>
<dbReference type="EMBL" id="M79341">
    <property type="protein sequence ID" value="AAA33285.1"/>
    <property type="molecule type" value="mRNA"/>
</dbReference>
<dbReference type="PIR" id="S17730">
    <property type="entry name" value="S17730"/>
</dbReference>
<dbReference type="SMR" id="P30157"/>
<dbReference type="GO" id="GO:0005737">
    <property type="term" value="C:cytoplasm"/>
    <property type="evidence" value="ECO:0007669"/>
    <property type="project" value="UniProtKB-KW"/>
</dbReference>
<dbReference type="GO" id="GO:0005874">
    <property type="term" value="C:microtubule"/>
    <property type="evidence" value="ECO:0007669"/>
    <property type="project" value="UniProtKB-KW"/>
</dbReference>
<dbReference type="GO" id="GO:0005525">
    <property type="term" value="F:GTP binding"/>
    <property type="evidence" value="ECO:0007669"/>
    <property type="project" value="UniProtKB-KW"/>
</dbReference>
<dbReference type="GO" id="GO:0003924">
    <property type="term" value="F:GTPase activity"/>
    <property type="evidence" value="ECO:0007669"/>
    <property type="project" value="InterPro"/>
</dbReference>
<dbReference type="GO" id="GO:0046872">
    <property type="term" value="F:metal ion binding"/>
    <property type="evidence" value="ECO:0007669"/>
    <property type="project" value="UniProtKB-KW"/>
</dbReference>
<dbReference type="GO" id="GO:0005200">
    <property type="term" value="F:structural constituent of cytoskeleton"/>
    <property type="evidence" value="ECO:0007669"/>
    <property type="project" value="InterPro"/>
</dbReference>
<dbReference type="GO" id="GO:0007017">
    <property type="term" value="P:microtubule-based process"/>
    <property type="evidence" value="ECO:0007669"/>
    <property type="project" value="InterPro"/>
</dbReference>
<dbReference type="CDD" id="cd02187">
    <property type="entry name" value="beta_tubulin"/>
    <property type="match status" value="1"/>
</dbReference>
<dbReference type="FunFam" id="1.10.287.600:FF:000006">
    <property type="entry name" value="Tubulin beta chain"/>
    <property type="match status" value="1"/>
</dbReference>
<dbReference type="FunFam" id="3.30.1330.20:FF:000002">
    <property type="entry name" value="Tubulin beta chain"/>
    <property type="match status" value="1"/>
</dbReference>
<dbReference type="FunFam" id="3.40.50.1440:FF:000003">
    <property type="entry name" value="Tubulin beta chain"/>
    <property type="match status" value="1"/>
</dbReference>
<dbReference type="Gene3D" id="1.10.287.600">
    <property type="entry name" value="Helix hairpin bin"/>
    <property type="match status" value="1"/>
</dbReference>
<dbReference type="Gene3D" id="3.30.1330.20">
    <property type="entry name" value="Tubulin/FtsZ, C-terminal domain"/>
    <property type="match status" value="1"/>
</dbReference>
<dbReference type="Gene3D" id="3.40.50.1440">
    <property type="entry name" value="Tubulin/FtsZ, GTPase domain"/>
    <property type="match status" value="1"/>
</dbReference>
<dbReference type="InterPro" id="IPR013838">
    <property type="entry name" value="Beta-tubulin_BS"/>
</dbReference>
<dbReference type="InterPro" id="IPR002453">
    <property type="entry name" value="Beta_tubulin"/>
</dbReference>
<dbReference type="InterPro" id="IPR008280">
    <property type="entry name" value="Tub_FtsZ_C"/>
</dbReference>
<dbReference type="InterPro" id="IPR000217">
    <property type="entry name" value="Tubulin"/>
</dbReference>
<dbReference type="InterPro" id="IPR037103">
    <property type="entry name" value="Tubulin/FtsZ-like_C"/>
</dbReference>
<dbReference type="InterPro" id="IPR018316">
    <property type="entry name" value="Tubulin/FtsZ_2-layer-sand-dom"/>
</dbReference>
<dbReference type="InterPro" id="IPR036525">
    <property type="entry name" value="Tubulin/FtsZ_GTPase_sf"/>
</dbReference>
<dbReference type="InterPro" id="IPR023123">
    <property type="entry name" value="Tubulin_C"/>
</dbReference>
<dbReference type="InterPro" id="IPR017975">
    <property type="entry name" value="Tubulin_CS"/>
</dbReference>
<dbReference type="InterPro" id="IPR003008">
    <property type="entry name" value="Tubulin_FtsZ_GTPase"/>
</dbReference>
<dbReference type="PANTHER" id="PTHR11588">
    <property type="entry name" value="TUBULIN"/>
    <property type="match status" value="1"/>
</dbReference>
<dbReference type="Pfam" id="PF00091">
    <property type="entry name" value="Tubulin"/>
    <property type="match status" value="1"/>
</dbReference>
<dbReference type="Pfam" id="PF03953">
    <property type="entry name" value="Tubulin_C"/>
    <property type="match status" value="1"/>
</dbReference>
<dbReference type="PRINTS" id="PR01163">
    <property type="entry name" value="BETATUBULIN"/>
</dbReference>
<dbReference type="PRINTS" id="PR01161">
    <property type="entry name" value="TUBULIN"/>
</dbReference>
<dbReference type="SMART" id="SM00864">
    <property type="entry name" value="Tubulin"/>
    <property type="match status" value="1"/>
</dbReference>
<dbReference type="SMART" id="SM00865">
    <property type="entry name" value="Tubulin_C"/>
    <property type="match status" value="1"/>
</dbReference>
<dbReference type="SUPFAM" id="SSF55307">
    <property type="entry name" value="Tubulin C-terminal domain-like"/>
    <property type="match status" value="1"/>
</dbReference>
<dbReference type="SUPFAM" id="SSF52490">
    <property type="entry name" value="Tubulin nucleotide-binding domain-like"/>
    <property type="match status" value="1"/>
</dbReference>
<dbReference type="PROSITE" id="PS00227">
    <property type="entry name" value="TUBULIN"/>
    <property type="match status" value="1"/>
</dbReference>
<dbReference type="PROSITE" id="PS00228">
    <property type="entry name" value="TUBULIN_B_AUTOREG"/>
    <property type="match status" value="1"/>
</dbReference>
<gene>
    <name type="primary">TUBB6</name>
</gene>
<feature type="chain" id="PRO_0000048341" description="Tubulin beta-6 chain">
    <location>
        <begin position="1"/>
        <end position="447"/>
    </location>
</feature>
<feature type="region of interest" description="Disordered" evidence="4">
    <location>
        <begin position="426"/>
        <end position="447"/>
    </location>
</feature>
<feature type="compositionally biased region" description="Acidic residues" evidence="4">
    <location>
        <begin position="429"/>
        <end position="447"/>
    </location>
</feature>
<feature type="binding site" evidence="3">
    <location>
        <position position="11"/>
    </location>
    <ligand>
        <name>GTP</name>
        <dbReference type="ChEBI" id="CHEBI:37565"/>
    </ligand>
</feature>
<feature type="binding site" evidence="2">
    <location>
        <position position="69"/>
    </location>
    <ligand>
        <name>GTP</name>
        <dbReference type="ChEBI" id="CHEBI:37565"/>
    </ligand>
</feature>
<feature type="binding site" evidence="2">
    <location>
        <position position="69"/>
    </location>
    <ligand>
        <name>Mg(2+)</name>
        <dbReference type="ChEBI" id="CHEBI:18420"/>
    </ligand>
</feature>
<feature type="binding site" evidence="3">
    <location>
        <position position="138"/>
    </location>
    <ligand>
        <name>GTP</name>
        <dbReference type="ChEBI" id="CHEBI:37565"/>
    </ligand>
</feature>
<feature type="binding site" evidence="3">
    <location>
        <position position="142"/>
    </location>
    <ligand>
        <name>GTP</name>
        <dbReference type="ChEBI" id="CHEBI:37565"/>
    </ligand>
</feature>
<feature type="binding site" evidence="3">
    <location>
        <position position="143"/>
    </location>
    <ligand>
        <name>GTP</name>
        <dbReference type="ChEBI" id="CHEBI:37565"/>
    </ligand>
</feature>
<feature type="binding site" evidence="3">
    <location>
        <position position="144"/>
    </location>
    <ligand>
        <name>GTP</name>
        <dbReference type="ChEBI" id="CHEBI:37565"/>
    </ligand>
</feature>
<feature type="binding site" evidence="3">
    <location>
        <position position="204"/>
    </location>
    <ligand>
        <name>GTP</name>
        <dbReference type="ChEBI" id="CHEBI:37565"/>
    </ligand>
</feature>
<feature type="binding site" evidence="3">
    <location>
        <position position="226"/>
    </location>
    <ligand>
        <name>GTP</name>
        <dbReference type="ChEBI" id="CHEBI:37565"/>
    </ligand>
</feature>
<comment type="function">
    <text evidence="1">Tubulin is the major constituent of microtubules, a cylinder consisting of laterally associated linear protofilaments composed of alpha- and beta-tubulin heterodimers. Microtubules grow by the addition of GTP-tubulin dimers to the microtubule end, where a stabilizing cap forms. Below the cap, tubulin dimers are in GDP-bound state, owing to GTPase activity of alpha-tubulin.</text>
</comment>
<comment type="cofactor">
    <cofactor evidence="2">
        <name>Mg(2+)</name>
        <dbReference type="ChEBI" id="CHEBI:18420"/>
    </cofactor>
</comment>
<comment type="subunit">
    <text>Dimer of alpha and beta chains. A typical microtubule is a hollow water-filled tube with an outer diameter of 25 nm and an inner diameter of 15 nM. Alpha-beta heterodimers associate head-to-tail to form protofilaments running lengthwise along the microtubule wall with the beta-tubulin subunit facing the microtubule plus end conferring a structural polarity. Microtubules usually have 13 protofilaments but different protofilament numbers can be found in some organisms and specialized cells.</text>
</comment>
<comment type="subcellular location">
    <subcellularLocation>
        <location>Cytoplasm</location>
        <location>Cytoskeleton</location>
    </subcellularLocation>
</comment>
<comment type="miscellaneous">
    <text>There are at least four genes coding for beta-tubulin in this organism.</text>
</comment>
<comment type="similarity">
    <text evidence="5">Belongs to the tubulin family.</text>
</comment>
<protein>
    <recommendedName>
        <fullName>Tubulin beta-6 chain</fullName>
    </recommendedName>
    <alternativeName>
        <fullName>Beta-6-tubulin</fullName>
    </alternativeName>
</protein>
<sequence length="447" mass="50147">MREIVHVQAGQCGNQIGSKFWEVISDEHGIDPTGRYHGDSDLQLERINCYFNEATAGRYVPRAILMDLEPGTMDSVRAGPFGQLFRPDNFVFGQTGAGNNWAKGHYTEGAELIDSVLDVVRKEAESCDALQGFQLTHSMGGGTGAGMGTLLISKVREEYPDRIMSTYSVIPSPKVSDTVVEPYNATLSVHQLVENADQCFTLDNEALYDICFRTLKLTTPTYGDLNHLVSAAICGTTCSLRFPGQLNCDLRKLAVNMVPFPRLHFFMIGFAPLTSRGSQQYRALTVPELTQQCFDSKNMMCAADPRHGRYLTCAVMFRGRMSTKEVDEQMLNVVNKNSSYFVEWIPNNVKASICDIPPKGLKMSTTFVGNTTAIQEVWKRVAEQFTAMFRRKAFLHWYTGEGMDEMEFTEAESNMNDLVSEYQQYQDATAEEEGEFDEDEELDDGMM</sequence>
<proteinExistence type="evidence at transcript level"/>
<evidence type="ECO:0000250" key="1">
    <source>
        <dbReference type="UniProtKB" id="P02557"/>
    </source>
</evidence>
<evidence type="ECO:0000250" key="2">
    <source>
        <dbReference type="UniProtKB" id="P68363"/>
    </source>
</evidence>
<evidence type="ECO:0000250" key="3">
    <source>
        <dbReference type="UniProtKB" id="Q13509"/>
    </source>
</evidence>
<evidence type="ECO:0000256" key="4">
    <source>
        <dbReference type="SAM" id="MobiDB-lite"/>
    </source>
</evidence>
<evidence type="ECO:0000305" key="5"/>
<keyword id="KW-0963">Cytoplasm</keyword>
<keyword id="KW-0206">Cytoskeleton</keyword>
<keyword id="KW-0342">GTP-binding</keyword>
<keyword id="KW-0460">Magnesium</keyword>
<keyword id="KW-0479">Metal-binding</keyword>
<keyword id="KW-0493">Microtubule</keyword>
<keyword id="KW-0547">Nucleotide-binding</keyword>
<accession>P30157</accession>